<dbReference type="EC" id="3.1.3.-"/>
<dbReference type="EMBL" id="M16691">
    <property type="protein sequence ID" value="AAD15120.1"/>
    <property type="molecule type" value="Genomic_DNA"/>
</dbReference>
<dbReference type="EMBL" id="AE006468">
    <property type="protein sequence ID" value="AAL20831.1"/>
    <property type="molecule type" value="Genomic_DNA"/>
</dbReference>
<dbReference type="PIR" id="A27088">
    <property type="entry name" value="A27088"/>
</dbReference>
<dbReference type="RefSeq" id="NP_460872.1">
    <property type="nucleotide sequence ID" value="NC_003197.2"/>
</dbReference>
<dbReference type="RefSeq" id="WP_000983586.1">
    <property type="nucleotide sequence ID" value="NC_003197.2"/>
</dbReference>
<dbReference type="PDB" id="2FKA">
    <property type="method" value="X-ray"/>
    <property type="resolution" value="2.00 A"/>
    <property type="chains" value="B=200-214"/>
</dbReference>
<dbReference type="PDB" id="2FLK">
    <property type="method" value="X-ray"/>
    <property type="resolution" value="2.10 A"/>
    <property type="chains" value="B=200-214"/>
</dbReference>
<dbReference type="PDB" id="2FLW">
    <property type="method" value="X-ray"/>
    <property type="resolution" value="2.00 A"/>
    <property type="chains" value="B=200-214"/>
</dbReference>
<dbReference type="PDB" id="2FMF">
    <property type="method" value="X-ray"/>
    <property type="resolution" value="2.00 A"/>
    <property type="chains" value="B=200-214"/>
</dbReference>
<dbReference type="PDB" id="2FMH">
    <property type="method" value="X-ray"/>
    <property type="resolution" value="2.00 A"/>
    <property type="chains" value="B=200-214"/>
</dbReference>
<dbReference type="PDB" id="2FMI">
    <property type="method" value="X-ray"/>
    <property type="resolution" value="2.30 A"/>
    <property type="chains" value="B=200-214"/>
</dbReference>
<dbReference type="PDB" id="2FMK">
    <property type="method" value="X-ray"/>
    <property type="resolution" value="2.00 A"/>
    <property type="chains" value="B=200-214"/>
</dbReference>
<dbReference type="PDB" id="2PL9">
    <property type="method" value="X-ray"/>
    <property type="resolution" value="2.60 A"/>
    <property type="chains" value="D/E/F=196-214"/>
</dbReference>
<dbReference type="PDB" id="2PMC">
    <property type="method" value="X-ray"/>
    <property type="resolution" value="2.69 A"/>
    <property type="chains" value="E/F=200-214"/>
</dbReference>
<dbReference type="PDBsum" id="2FKA"/>
<dbReference type="PDBsum" id="2FLK"/>
<dbReference type="PDBsum" id="2FLW"/>
<dbReference type="PDBsum" id="2FMF"/>
<dbReference type="PDBsum" id="2FMH"/>
<dbReference type="PDBsum" id="2FMI"/>
<dbReference type="PDBsum" id="2FMK"/>
<dbReference type="PDBsum" id="2PL9"/>
<dbReference type="PDBsum" id="2PMC"/>
<dbReference type="SMR" id="P07800"/>
<dbReference type="STRING" id="99287.STM1915"/>
<dbReference type="PaxDb" id="99287-STM1915"/>
<dbReference type="GeneID" id="1253436"/>
<dbReference type="KEGG" id="stm:STM1915"/>
<dbReference type="PATRIC" id="fig|99287.12.peg.2031"/>
<dbReference type="HOGENOM" id="CLU_080718_1_0_6"/>
<dbReference type="OMA" id="DWGRFMR"/>
<dbReference type="PhylomeDB" id="P07800"/>
<dbReference type="BioCyc" id="SENT99287:STM1915-MONOMER"/>
<dbReference type="EvolutionaryTrace" id="P07800"/>
<dbReference type="PHI-base" id="PHI:10050"/>
<dbReference type="Proteomes" id="UP000001014">
    <property type="component" value="Chromosome"/>
</dbReference>
<dbReference type="GO" id="GO:0009288">
    <property type="term" value="C:bacterial-type flagellum"/>
    <property type="evidence" value="ECO:0007669"/>
    <property type="project" value="InterPro"/>
</dbReference>
<dbReference type="GO" id="GO:0005737">
    <property type="term" value="C:cytoplasm"/>
    <property type="evidence" value="ECO:0007669"/>
    <property type="project" value="UniProtKB-SubCell"/>
</dbReference>
<dbReference type="GO" id="GO:0004721">
    <property type="term" value="F:phosphoprotein phosphatase activity"/>
    <property type="evidence" value="ECO:0007669"/>
    <property type="project" value="UniProtKB-KW"/>
</dbReference>
<dbReference type="GO" id="GO:0097588">
    <property type="term" value="P:archaeal or bacterial-type flagellum-dependent cell motility"/>
    <property type="evidence" value="ECO:0007669"/>
    <property type="project" value="UniProtKB-KW"/>
</dbReference>
<dbReference type="GO" id="GO:0006935">
    <property type="term" value="P:chemotaxis"/>
    <property type="evidence" value="ECO:0007669"/>
    <property type="project" value="UniProtKB-KW"/>
</dbReference>
<dbReference type="GO" id="GO:0050920">
    <property type="term" value="P:regulation of chemotaxis"/>
    <property type="evidence" value="ECO:0007669"/>
    <property type="project" value="InterPro"/>
</dbReference>
<dbReference type="FunFam" id="1.10.287.500:FF:000001">
    <property type="entry name" value="Protein phosphatase CheZ"/>
    <property type="match status" value="1"/>
</dbReference>
<dbReference type="Gene3D" id="1.10.287.500">
    <property type="entry name" value="Helix hairpin bin"/>
    <property type="match status" value="1"/>
</dbReference>
<dbReference type="Gene3D" id="1.20.5.590">
    <property type="entry name" value="Single helix bin"/>
    <property type="match status" value="1"/>
</dbReference>
<dbReference type="InterPro" id="IPR007439">
    <property type="entry name" value="Chemotax_Pase_CheZ"/>
</dbReference>
<dbReference type="InterPro" id="IPR050992">
    <property type="entry name" value="CheZ_family_phosphatases"/>
</dbReference>
<dbReference type="NCBIfam" id="NF008368">
    <property type="entry name" value="PRK11166.1"/>
    <property type="match status" value="1"/>
</dbReference>
<dbReference type="PANTHER" id="PTHR43693">
    <property type="entry name" value="PROTEIN PHOSPHATASE CHEZ"/>
    <property type="match status" value="1"/>
</dbReference>
<dbReference type="PANTHER" id="PTHR43693:SF1">
    <property type="entry name" value="PROTEIN PHOSPHATASE CHEZ"/>
    <property type="match status" value="1"/>
</dbReference>
<dbReference type="Pfam" id="PF04344">
    <property type="entry name" value="CheZ"/>
    <property type="match status" value="1"/>
</dbReference>
<dbReference type="PIRSF" id="PIRSF002884">
    <property type="entry name" value="CheZ"/>
    <property type="match status" value="1"/>
</dbReference>
<dbReference type="SUPFAM" id="SSF75708">
    <property type="entry name" value="Chemotaxis phosphatase CheZ"/>
    <property type="match status" value="1"/>
</dbReference>
<proteinExistence type="evidence at protein level"/>
<organism>
    <name type="scientific">Salmonella typhimurium (strain LT2 / SGSC1412 / ATCC 700720)</name>
    <dbReference type="NCBI Taxonomy" id="99287"/>
    <lineage>
        <taxon>Bacteria</taxon>
        <taxon>Pseudomonadati</taxon>
        <taxon>Pseudomonadota</taxon>
        <taxon>Gammaproteobacteria</taxon>
        <taxon>Enterobacterales</taxon>
        <taxon>Enterobacteriaceae</taxon>
        <taxon>Salmonella</taxon>
    </lineage>
</organism>
<reference key="1">
    <citation type="journal article" date="1987" name="J. Bacteriol.">
        <title>Purification and characterization of the CheZ protein of bacterial chemotaxis.</title>
        <authorList>
            <person name="Stock A.M."/>
            <person name="Stock J.B."/>
        </authorList>
    </citation>
    <scope>NUCLEOTIDE SEQUENCE [GENOMIC DNA]</scope>
</reference>
<reference key="2">
    <citation type="journal article" date="2001" name="Nature">
        <title>Complete genome sequence of Salmonella enterica serovar Typhimurium LT2.</title>
        <authorList>
            <person name="McClelland M."/>
            <person name="Sanderson K.E."/>
            <person name="Spieth J."/>
            <person name="Clifton S.W."/>
            <person name="Latreille P."/>
            <person name="Courtney L."/>
            <person name="Porwollik S."/>
            <person name="Ali J."/>
            <person name="Dante M."/>
            <person name="Du F."/>
            <person name="Hou S."/>
            <person name="Layman D."/>
            <person name="Leonard S."/>
            <person name="Nguyen C."/>
            <person name="Scott K."/>
            <person name="Holmes A."/>
            <person name="Grewal N."/>
            <person name="Mulvaney E."/>
            <person name="Ryan E."/>
            <person name="Sun H."/>
            <person name="Florea L."/>
            <person name="Miller W."/>
            <person name="Stoneking T."/>
            <person name="Nhan M."/>
            <person name="Waterston R."/>
            <person name="Wilson R.K."/>
        </authorList>
    </citation>
    <scope>NUCLEOTIDE SEQUENCE [LARGE SCALE GENOMIC DNA]</scope>
    <source>
        <strain>LT2 / SGSC1412 / ATCC 700720</strain>
    </source>
</reference>
<reference key="3">
    <citation type="journal article" date="1991" name="J. Biol. Chem.">
        <title>Roles of the highly conserved aspartate and lysine residues in the response regulator of bacterial chemotaxis.</title>
        <authorList>
            <person name="Lukat G.S."/>
            <person name="Lee B.H."/>
            <person name="Mottonen J.M."/>
            <person name="Stock A.M."/>
            <person name="Stock J.B."/>
        </authorList>
    </citation>
    <scope>FUNCTION</scope>
</reference>
<reference key="4">
    <citation type="journal article" date="1993" name="Biochim. Biophys. Acta">
        <title>CheZ mutants with enhanced ability to dephosphorylate CheY, the response regulator in bacterial chemotaxis.</title>
        <authorList>
            <person name="Huang C."/>
            <person name="Stewart R.C."/>
        </authorList>
    </citation>
    <scope>FUNCTION</scope>
    <scope>INTERACTION WITH CHEY</scope>
    <scope>MUTAGENESIS OF ARG-54 AND VAL-166</scope>
</reference>
<reference key="5">
    <citation type="journal article" date="1996" name="J. Biol. Chem.">
        <title>Mutants with defective phosphatase activity show no phosphorylation-dependent oligomerization of CheZ. The phosphatase of bacterial chemotaxis.</title>
        <authorList>
            <person name="Blat Y."/>
            <person name="Eisenbach M."/>
        </authorList>
    </citation>
    <scope>MUTAGENESIS OF LEU-110; PHE-141; ASP-143 AND THR-145</scope>
</reference>
<reference key="6">
    <citation type="journal article" date="1996" name="Proc. Natl. Acad. Sci. U.S.A.">
        <title>Signal termination in bacterial chemotaxis: CheZ mediates dephosphorylation of free rather than switch-bound CheY.</title>
        <authorList>
            <person name="Bren A."/>
            <person name="Welch M."/>
            <person name="Blat Y."/>
            <person name="Eisenbach M."/>
        </authorList>
    </citation>
    <scope>FUNCTION</scope>
    <scope>INTERACTION WITH CHEY</scope>
</reference>
<reference key="7">
    <citation type="journal article" date="1998" name="J. Mol. Biol.">
        <title>Regulation of phosphatase activity in bacterial chemotaxis.</title>
        <authorList>
            <person name="Blat Y."/>
            <person name="Gillespie B."/>
            <person name="Bren A."/>
            <person name="Dahlquist F.W."/>
            <person name="Eisenbach M."/>
        </authorList>
    </citation>
    <scope>FUNCTION</scope>
    <scope>INTERACTION WITH CHEY</scope>
    <scope>MUTAGENESIS OF ARG-54</scope>
</reference>
<reference key="8">
    <citation type="journal article" date="2003" name="Biochemistry">
        <title>Mechanism of phosphatase activity in the chemotaxis response regulator CheY.</title>
        <authorList>
            <person name="Wolanin P.M."/>
            <person name="Webre D.J."/>
            <person name="Stock J.B."/>
        </authorList>
    </citation>
    <scope>FUNCTION</scope>
    <scope>INTERACTION WITH CHEY</scope>
</reference>
<reference key="9">
    <citation type="journal article" date="2010" name="Mol. Cell">
        <title>The c-di-GMP binding protein YcgR controls flagellar motor direction and speed to affect chemotaxis by a 'backstop brake' mechanism.</title>
        <authorList>
            <person name="Paul K."/>
            <person name="Nieto V."/>
            <person name="Carlquist W.C."/>
            <person name="Blair D.F."/>
            <person name="Harshey R.M."/>
        </authorList>
    </citation>
    <scope>DISRUPTION PHENOTYPE</scope>
    <source>
        <strain>ATCC 14028 / SGSC 2980 / CDC 6516-60 / NCTC 12023</strain>
    </source>
</reference>
<reference key="10">
    <citation type="journal article" date="2006" name="J. Mol. Biol.">
        <title>Crystal structures of beryllium fluoride-free and beryllium fluoride-bound CheY in complex with the conserved C-terminal peptide of CheZ reveal dual binding modes specific to CheY conformation.</title>
        <authorList>
            <person name="Guhaniyogi J."/>
            <person name="Robinson V.L."/>
            <person name="Stock A.M."/>
        </authorList>
    </citation>
    <scope>X-RAY CRYSTALLOGRAPHY (2.3 ANGSTROMS) OF 200-214 IN COMPLEX WITH CHEY</scope>
</reference>
<reference key="11">
    <citation type="journal article" date="2008" name="J. Bacteriol.">
        <title>Interaction of CheY with the C-terminal peptide of CheZ.</title>
        <authorList>
            <person name="Guhaniyogi J."/>
            <person name="Wu T."/>
            <person name="Patel S.S."/>
            <person name="Stock A.M."/>
        </authorList>
    </citation>
    <scope>X-RAY CRYSTALLOGRAPHY (2.69 ANGSTROMS) OF 207-214 IN COMPLEX WITH CHEY</scope>
</reference>
<evidence type="ECO:0000250" key="1"/>
<evidence type="ECO:0000256" key="2">
    <source>
        <dbReference type="SAM" id="MobiDB-lite"/>
    </source>
</evidence>
<evidence type="ECO:0000269" key="3">
    <source>
    </source>
</evidence>
<evidence type="ECO:0000269" key="4">
    <source>
    </source>
</evidence>
<evidence type="ECO:0000269" key="5">
    <source>
    </source>
</evidence>
<evidence type="ECO:0000269" key="6">
    <source>
    </source>
</evidence>
<evidence type="ECO:0000269" key="7">
    <source>
    </source>
</evidence>
<evidence type="ECO:0000269" key="8">
    <source>
    </source>
</evidence>
<evidence type="ECO:0000269" key="9">
    <source>
    </source>
</evidence>
<evidence type="ECO:0000269" key="10">
    <source>
    </source>
</evidence>
<evidence type="ECO:0000269" key="11">
    <source>
    </source>
</evidence>
<evidence type="ECO:0000305" key="12"/>
<evidence type="ECO:0007829" key="13">
    <source>
        <dbReference type="PDB" id="2FMF"/>
    </source>
</evidence>
<keyword id="KW-0002">3D-structure</keyword>
<keyword id="KW-0145">Chemotaxis</keyword>
<keyword id="KW-0963">Cytoplasm</keyword>
<keyword id="KW-0283">Flagellar rotation</keyword>
<keyword id="KW-0378">Hydrolase</keyword>
<keyword id="KW-0904">Protein phosphatase</keyword>
<keyword id="KW-1185">Reference proteome</keyword>
<gene>
    <name type="primary">cheZ</name>
    <name type="ordered locus">STM1915</name>
</gene>
<feature type="chain" id="PRO_0000089643" description="Protein phosphatase CheZ">
    <location>
        <begin position="1"/>
        <end position="214"/>
    </location>
</feature>
<feature type="region of interest" description="Disordered" evidence="2">
    <location>
        <begin position="176"/>
        <end position="199"/>
    </location>
</feature>
<feature type="compositionally biased region" description="Polar residues" evidence="2">
    <location>
        <begin position="184"/>
        <end position="193"/>
    </location>
</feature>
<feature type="site" description="Enhances dephosphorylation of CheY-P" evidence="1">
    <location>
        <position position="147"/>
    </location>
</feature>
<feature type="mutagenesis site" description="Constitutively active." evidence="8 11">
    <original>R</original>
    <variation>C</variation>
    <location>
        <position position="54"/>
    </location>
</feature>
<feature type="mutagenesis site" description="Loss of function." evidence="9">
    <original>L</original>
    <variation>P</variation>
    <location>
        <position position="110"/>
    </location>
</feature>
<feature type="mutagenesis site" description="Loss of function." evidence="9">
    <original>F</original>
    <variation>I</variation>
    <location>
        <position position="141"/>
    </location>
</feature>
<feature type="mutagenesis site" description="Loss of function." evidence="9">
    <original>D</original>
    <variation>E</variation>
    <location>
        <position position="143"/>
    </location>
</feature>
<feature type="mutagenesis site" description="Loss of function." evidence="9">
    <original>T</original>
    <variation>M</variation>
    <location>
        <position position="145"/>
    </location>
</feature>
<feature type="mutagenesis site" description="Enhanced activity." evidence="8">
    <original>V</original>
    <variation>G</variation>
    <location>
        <position position="166"/>
    </location>
</feature>
<feature type="helix" evidence="13">
    <location>
        <begin position="203"/>
        <end position="212"/>
    </location>
</feature>
<name>CHEZ_SALTY</name>
<sequence>MMQPSIKPADEGSAGDIIARIGSLTRMLRDSLRELGLDQAIAEAAEAIPDARDRLDYVVQMTAQAAERALNSVEASQPHQDAMEKEAKALTQRWDEWFDNPIELSDARELVTDTRQFLRDVPGHTSFTNAQLLDIMMAQDFQDLTGQVIKRMMDVIQEIERQLLMVLLENIPEQSARPKRENESLLNGPQVDTSKAGVVASQDQVDDLLDSLGF</sequence>
<protein>
    <recommendedName>
        <fullName>Protein phosphatase CheZ</fullName>
        <ecNumber>3.1.3.-</ecNumber>
    </recommendedName>
    <alternativeName>
        <fullName>Chemotaxis protein CheZ</fullName>
    </alternativeName>
</protein>
<accession>P07800</accession>
<comment type="function">
    <text evidence="3 6 8 10 11">Plays an important role in bacterial chemotaxis signal transduction pathway by accelerating the dephosphorylation of phosphorylated CheY (CheY-P). Acts on free CheY-P.</text>
</comment>
<comment type="subunit">
    <text evidence="3 4 5 8 10 11">Homodimer. Interacts (via C-terminus) with phosphorylated CheY (CheY-P).</text>
</comment>
<comment type="subcellular location">
    <subcellularLocation>
        <location>Cytoplasm</location>
    </subcellularLocation>
</comment>
<comment type="disruption phenotype">
    <text evidence="7">Cells lacking this gene display a strong clockwise motor bias; in combination with a yhjH disruption and overexpression of ycgR, cells switch from clockwise to a counterclockwise bias.</text>
</comment>
<comment type="similarity">
    <text evidence="12">Belongs to the CheZ family.</text>
</comment>